<protein>
    <recommendedName>
        <fullName>NADH-ubiquinone oxidoreductase chain 4L</fullName>
        <ecNumber>7.1.1.2</ecNumber>
    </recommendedName>
    <alternativeName>
        <fullName>NADH dehydrogenase subunit 4L</fullName>
    </alternativeName>
</protein>
<evidence type="ECO:0000250" key="1"/>
<evidence type="ECO:0000250" key="2">
    <source>
        <dbReference type="UniProtKB" id="P03901"/>
    </source>
</evidence>
<evidence type="ECO:0000255" key="3"/>
<evidence type="ECO:0000305" key="4"/>
<reference key="1">
    <citation type="journal article" date="1995" name="Genetics">
        <title>Complete sequence of a sea lamprey (Petromyzon marinus) mitochondrial genome: early establishment of the vertebrate genome organization.</title>
        <authorList>
            <person name="Lee W.J."/>
            <person name="Kocher T.D."/>
        </authorList>
    </citation>
    <scope>NUCLEOTIDE SEQUENCE [GENOMIC DNA]</scope>
</reference>
<name>NU4LM_PETMA</name>
<dbReference type="EC" id="7.1.1.2"/>
<dbReference type="EMBL" id="U11880">
    <property type="protein sequence ID" value="AAB08746.1"/>
    <property type="molecule type" value="Genomic_DNA"/>
</dbReference>
<dbReference type="PIR" id="S55012">
    <property type="entry name" value="S55012"/>
</dbReference>
<dbReference type="RefSeq" id="NP_008156.1">
    <property type="nucleotide sequence ID" value="NC_001626.1"/>
</dbReference>
<dbReference type="SMR" id="Q35541"/>
<dbReference type="STRING" id="7757.ENSPMAP00000011439"/>
<dbReference type="Ensembl" id="ENSPMAT00000014133.1">
    <property type="protein sequence ID" value="ENSPMAP00000011439.1"/>
    <property type="gene ID" value="ENSPMAG00000013106.1"/>
</dbReference>
<dbReference type="GeneID" id="807811"/>
<dbReference type="KEGG" id="pmrn:807811"/>
<dbReference type="CTD" id="4539"/>
<dbReference type="GeneTree" id="ENSGT00940000164968"/>
<dbReference type="HOGENOM" id="CLU_182394_0_0_1"/>
<dbReference type="OMA" id="MYRSHLM"/>
<dbReference type="OrthoDB" id="6146597at2759"/>
<dbReference type="Proteomes" id="UP001318040">
    <property type="component" value="Mitochondrion MT"/>
</dbReference>
<dbReference type="GO" id="GO:0031966">
    <property type="term" value="C:mitochondrial membrane"/>
    <property type="evidence" value="ECO:0007669"/>
    <property type="project" value="UniProtKB-SubCell"/>
</dbReference>
<dbReference type="GO" id="GO:0045271">
    <property type="term" value="C:respiratory chain complex I"/>
    <property type="evidence" value="ECO:0000250"/>
    <property type="project" value="UniProtKB"/>
</dbReference>
<dbReference type="GO" id="GO:0008137">
    <property type="term" value="F:NADH dehydrogenase (ubiquinone) activity"/>
    <property type="evidence" value="ECO:0000250"/>
    <property type="project" value="UniProtKB"/>
</dbReference>
<dbReference type="GO" id="GO:0042773">
    <property type="term" value="P:ATP synthesis coupled electron transport"/>
    <property type="evidence" value="ECO:0007669"/>
    <property type="project" value="InterPro"/>
</dbReference>
<dbReference type="Gene3D" id="1.10.287.3510">
    <property type="match status" value="1"/>
</dbReference>
<dbReference type="InterPro" id="IPR001133">
    <property type="entry name" value="NADH_UbQ_OxRdtase_chain4L/K"/>
</dbReference>
<dbReference type="InterPro" id="IPR039428">
    <property type="entry name" value="NUOK/Mnh_C1-like"/>
</dbReference>
<dbReference type="PANTHER" id="PTHR11434:SF0">
    <property type="entry name" value="NADH-UBIQUINONE OXIDOREDUCTASE CHAIN 4L"/>
    <property type="match status" value="1"/>
</dbReference>
<dbReference type="PANTHER" id="PTHR11434">
    <property type="entry name" value="NADH-UBIQUINONE OXIDOREDUCTASE SUBUNIT ND4L"/>
    <property type="match status" value="1"/>
</dbReference>
<dbReference type="Pfam" id="PF00420">
    <property type="entry name" value="Oxidored_q2"/>
    <property type="match status" value="1"/>
</dbReference>
<geneLocation type="mitochondrion"/>
<accession>Q35541</accession>
<feature type="chain" id="PRO_0000118468" description="NADH-ubiquinone oxidoreductase chain 4L">
    <location>
        <begin position="1"/>
        <end position="96"/>
    </location>
</feature>
<feature type="transmembrane region" description="Helical" evidence="3">
    <location>
        <begin position="1"/>
        <end position="21"/>
    </location>
</feature>
<feature type="transmembrane region" description="Helical" evidence="3">
    <location>
        <begin position="27"/>
        <end position="47"/>
    </location>
</feature>
<feature type="transmembrane region" description="Helical" evidence="3">
    <location>
        <begin position="57"/>
        <end position="77"/>
    </location>
</feature>
<organism>
    <name type="scientific">Petromyzon marinus</name>
    <name type="common">Sea lamprey</name>
    <dbReference type="NCBI Taxonomy" id="7757"/>
    <lineage>
        <taxon>Eukaryota</taxon>
        <taxon>Metazoa</taxon>
        <taxon>Chordata</taxon>
        <taxon>Craniata</taxon>
        <taxon>Vertebrata</taxon>
        <taxon>Cyclostomata</taxon>
        <taxon>Hyperoartia</taxon>
        <taxon>Petromyzontiformes</taxon>
        <taxon>Petromyzontidae</taxon>
        <taxon>Petromyzon</taxon>
    </lineage>
</organism>
<gene>
    <name type="primary">MT-ND4L</name>
    <name type="synonym">MTND4L</name>
    <name type="synonym">NADH4L</name>
    <name type="synonym">ND4L</name>
</gene>
<keyword id="KW-0249">Electron transport</keyword>
<keyword id="KW-0472">Membrane</keyword>
<keyword id="KW-0496">Mitochondrion</keyword>
<keyword id="KW-0520">NAD</keyword>
<keyword id="KW-0679">Respiratory chain</keyword>
<keyword id="KW-1278">Translocase</keyword>
<keyword id="KW-0812">Transmembrane</keyword>
<keyword id="KW-1133">Transmembrane helix</keyword>
<keyword id="KW-0813">Transport</keyword>
<keyword id="KW-0830">Ubiquinone</keyword>
<sequence length="96" mass="10393">MPTTLIFTSFFLALLGLSLQRKHLLSLLLTLESMALALYVSTALWALNNTSLPIMAAPLIILTFSACEAGMGLSLMIATARTHNTDQLKALNLLKC</sequence>
<comment type="function">
    <text evidence="2">Core subunit of the mitochondrial membrane respiratory chain NADH dehydrogenase (Complex I) which catalyzes electron transfer from NADH through the respiratory chain, using ubiquinone as an electron acceptor. Part of the enzyme membrane arm which is embedded in the lipid bilayer and involved in proton translocation.</text>
</comment>
<comment type="catalytic activity">
    <reaction evidence="2">
        <text>a ubiquinone + NADH + 5 H(+)(in) = a ubiquinol + NAD(+) + 4 H(+)(out)</text>
        <dbReference type="Rhea" id="RHEA:29091"/>
        <dbReference type="Rhea" id="RHEA-COMP:9565"/>
        <dbReference type="Rhea" id="RHEA-COMP:9566"/>
        <dbReference type="ChEBI" id="CHEBI:15378"/>
        <dbReference type="ChEBI" id="CHEBI:16389"/>
        <dbReference type="ChEBI" id="CHEBI:17976"/>
        <dbReference type="ChEBI" id="CHEBI:57540"/>
        <dbReference type="ChEBI" id="CHEBI:57945"/>
        <dbReference type="EC" id="7.1.1.2"/>
    </reaction>
    <physiologicalReaction direction="left-to-right" evidence="2">
        <dbReference type="Rhea" id="RHEA:29092"/>
    </physiologicalReaction>
</comment>
<comment type="subcellular location">
    <subcellularLocation>
        <location evidence="1">Mitochondrion membrane</location>
        <topology evidence="1">Multi-pass membrane protein</topology>
    </subcellularLocation>
</comment>
<comment type="similarity">
    <text evidence="4">Belongs to the complex I subunit 4L family.</text>
</comment>
<proteinExistence type="inferred from homology"/>